<accession>P0C327</accession>
<accession>P12129</accession>
<accession>Q6QXX7</accession>
<accession>Q6QY40</accession>
<feature type="chain" id="PRO_0000288696" description="NAD(P)H-quinone oxidoreductase subunit 5, chloroplastic">
    <location>
        <begin position="1"/>
        <end position="734"/>
    </location>
</feature>
<feature type="transmembrane region" description="Helical" evidence="2">
    <location>
        <begin position="9"/>
        <end position="29"/>
    </location>
</feature>
<feature type="transmembrane region" description="Helical" evidence="2">
    <location>
        <begin position="39"/>
        <end position="59"/>
    </location>
</feature>
<feature type="transmembrane region" description="Helical" evidence="2">
    <location>
        <begin position="89"/>
        <end position="109"/>
    </location>
</feature>
<feature type="transmembrane region" description="Helical" evidence="2">
    <location>
        <begin position="125"/>
        <end position="145"/>
    </location>
</feature>
<feature type="transmembrane region" description="Helical" evidence="2">
    <location>
        <begin position="147"/>
        <end position="167"/>
    </location>
</feature>
<feature type="transmembrane region" description="Helical" evidence="2">
    <location>
        <begin position="185"/>
        <end position="205"/>
    </location>
</feature>
<feature type="transmembrane region" description="Helical" evidence="2">
    <location>
        <begin position="224"/>
        <end position="244"/>
    </location>
</feature>
<feature type="transmembrane region" description="Helical" evidence="2">
    <location>
        <begin position="258"/>
        <end position="278"/>
    </location>
</feature>
<feature type="transmembrane region" description="Helical" evidence="2">
    <location>
        <begin position="280"/>
        <end position="300"/>
    </location>
</feature>
<feature type="transmembrane region" description="Helical" evidence="2">
    <location>
        <begin position="327"/>
        <end position="347"/>
    </location>
</feature>
<feature type="transmembrane region" description="Helical" evidence="2">
    <location>
        <begin position="354"/>
        <end position="374"/>
    </location>
</feature>
<feature type="transmembrane region" description="Helical" evidence="2">
    <location>
        <begin position="396"/>
        <end position="416"/>
    </location>
</feature>
<feature type="transmembrane region" description="Helical" evidence="2">
    <location>
        <begin position="425"/>
        <end position="445"/>
    </location>
</feature>
<feature type="transmembrane region" description="Helical" evidence="2">
    <location>
        <begin position="542"/>
        <end position="562"/>
    </location>
</feature>
<feature type="transmembrane region" description="Helical" evidence="2">
    <location>
        <begin position="605"/>
        <end position="625"/>
    </location>
</feature>
<feature type="transmembrane region" description="Helical" evidence="2">
    <location>
        <begin position="714"/>
        <end position="734"/>
    </location>
</feature>
<organism>
    <name type="scientific">Oryza sativa subsp. indica</name>
    <name type="common">Rice</name>
    <dbReference type="NCBI Taxonomy" id="39946"/>
    <lineage>
        <taxon>Eukaryota</taxon>
        <taxon>Viridiplantae</taxon>
        <taxon>Streptophyta</taxon>
        <taxon>Embryophyta</taxon>
        <taxon>Tracheophyta</taxon>
        <taxon>Spermatophyta</taxon>
        <taxon>Magnoliopsida</taxon>
        <taxon>Liliopsida</taxon>
        <taxon>Poales</taxon>
        <taxon>Poaceae</taxon>
        <taxon>BOP clade</taxon>
        <taxon>Oryzoideae</taxon>
        <taxon>Oryzeae</taxon>
        <taxon>Oryzinae</taxon>
        <taxon>Oryza</taxon>
        <taxon>Oryza sativa</taxon>
    </lineage>
</organism>
<dbReference type="EC" id="7.1.1.-"/>
<dbReference type="EMBL" id="AY522329">
    <property type="protein sequence ID" value="AAS46089.1"/>
    <property type="molecule type" value="Genomic_DNA"/>
</dbReference>
<dbReference type="RefSeq" id="YP_009161416.1">
    <property type="nucleotide sequence ID" value="NC_027678.1"/>
</dbReference>
<dbReference type="RefSeq" id="YP_654249.1">
    <property type="nucleotide sequence ID" value="NC_008155.1"/>
</dbReference>
<dbReference type="SMR" id="P0C327"/>
<dbReference type="STRING" id="39946.P0C327"/>
<dbReference type="GeneID" id="4126907"/>
<dbReference type="HOGENOM" id="CLU_007100_6_1_1"/>
<dbReference type="Proteomes" id="UP000007015">
    <property type="component" value="Chloroplast"/>
</dbReference>
<dbReference type="GO" id="GO:0009535">
    <property type="term" value="C:chloroplast thylakoid membrane"/>
    <property type="evidence" value="ECO:0007669"/>
    <property type="project" value="UniProtKB-SubCell"/>
</dbReference>
<dbReference type="GO" id="GO:0009536">
    <property type="term" value="C:plastid"/>
    <property type="evidence" value="ECO:0000305"/>
    <property type="project" value="Gramene"/>
</dbReference>
<dbReference type="GO" id="GO:0008137">
    <property type="term" value="F:NADH dehydrogenase (ubiquinone) activity"/>
    <property type="evidence" value="ECO:0007669"/>
    <property type="project" value="InterPro"/>
</dbReference>
<dbReference type="GO" id="GO:0048038">
    <property type="term" value="F:quinone binding"/>
    <property type="evidence" value="ECO:0007669"/>
    <property type="project" value="UniProtKB-KW"/>
</dbReference>
<dbReference type="GO" id="GO:0042773">
    <property type="term" value="P:ATP synthesis coupled electron transport"/>
    <property type="evidence" value="ECO:0007669"/>
    <property type="project" value="InterPro"/>
</dbReference>
<dbReference type="GO" id="GO:0015990">
    <property type="term" value="P:electron transport coupled proton transport"/>
    <property type="evidence" value="ECO:0007669"/>
    <property type="project" value="TreeGrafter"/>
</dbReference>
<dbReference type="Gene3D" id="1.20.5.2700">
    <property type="match status" value="1"/>
</dbReference>
<dbReference type="InterPro" id="IPR002128">
    <property type="entry name" value="NADH_UbQ_OxRdtase_chlpt_su5_C"/>
</dbReference>
<dbReference type="InterPro" id="IPR018393">
    <property type="entry name" value="NADHpl_OxRdtase_5_subgr"/>
</dbReference>
<dbReference type="InterPro" id="IPR001750">
    <property type="entry name" value="ND/Mrp_TM"/>
</dbReference>
<dbReference type="InterPro" id="IPR003945">
    <property type="entry name" value="NU5C-like"/>
</dbReference>
<dbReference type="InterPro" id="IPR001516">
    <property type="entry name" value="Proton_antipo_N"/>
</dbReference>
<dbReference type="NCBIfam" id="TIGR01974">
    <property type="entry name" value="NDH_I_L"/>
    <property type="match status" value="1"/>
</dbReference>
<dbReference type="NCBIfam" id="NF005141">
    <property type="entry name" value="PRK06590.1"/>
    <property type="match status" value="1"/>
</dbReference>
<dbReference type="PANTHER" id="PTHR42829">
    <property type="entry name" value="NADH-UBIQUINONE OXIDOREDUCTASE CHAIN 5"/>
    <property type="match status" value="1"/>
</dbReference>
<dbReference type="PANTHER" id="PTHR42829:SF2">
    <property type="entry name" value="NADH-UBIQUINONE OXIDOREDUCTASE CHAIN 5"/>
    <property type="match status" value="1"/>
</dbReference>
<dbReference type="Pfam" id="PF01010">
    <property type="entry name" value="Proton_antipo_C"/>
    <property type="match status" value="1"/>
</dbReference>
<dbReference type="Pfam" id="PF00361">
    <property type="entry name" value="Proton_antipo_M"/>
    <property type="match status" value="1"/>
</dbReference>
<dbReference type="Pfam" id="PF00662">
    <property type="entry name" value="Proton_antipo_N"/>
    <property type="match status" value="1"/>
</dbReference>
<dbReference type="PRINTS" id="PR01434">
    <property type="entry name" value="NADHDHGNASE5"/>
</dbReference>
<dbReference type="PRINTS" id="PR01435">
    <property type="entry name" value="NPOXDRDTASE5"/>
</dbReference>
<gene>
    <name type="primary">ndhF</name>
    <name type="ORF">9311164</name>
</gene>
<protein>
    <recommendedName>
        <fullName>NAD(P)H-quinone oxidoreductase subunit 5, chloroplastic</fullName>
        <ecNumber>7.1.1.-</ecNumber>
    </recommendedName>
    <alternativeName>
        <fullName>NAD(P)H dehydrogenase subunit 5</fullName>
    </alternativeName>
    <alternativeName>
        <fullName>NADH-plastoquinone oxidoreductase subunit 5</fullName>
    </alternativeName>
</protein>
<reference key="1">
    <citation type="journal article" date="2004" name="Plant Physiol.">
        <title>A comparison of rice chloroplast genomes.</title>
        <authorList>
            <person name="Tang J."/>
            <person name="Xia H."/>
            <person name="Cao M."/>
            <person name="Zhang X."/>
            <person name="Zeng W."/>
            <person name="Hu S."/>
            <person name="Tong W."/>
            <person name="Wang J."/>
            <person name="Wang J."/>
            <person name="Yu J."/>
            <person name="Yang H."/>
            <person name="Zhu L."/>
        </authorList>
    </citation>
    <scope>NUCLEOTIDE SEQUENCE [LARGE SCALE GENOMIC DNA]</scope>
    <source>
        <strain>cv. 93-11</strain>
    </source>
</reference>
<name>NU5C_ORYSI</name>
<proteinExistence type="inferred from homology"/>
<geneLocation type="chloroplast"/>
<keyword id="KW-0150">Chloroplast</keyword>
<keyword id="KW-0472">Membrane</keyword>
<keyword id="KW-0520">NAD</keyword>
<keyword id="KW-0521">NADP</keyword>
<keyword id="KW-0934">Plastid</keyword>
<keyword id="KW-0618">Plastoquinone</keyword>
<keyword id="KW-0874">Quinone</keyword>
<keyword id="KW-1185">Reference proteome</keyword>
<keyword id="KW-0793">Thylakoid</keyword>
<keyword id="KW-1278">Translocase</keyword>
<keyword id="KW-0812">Transmembrane</keyword>
<keyword id="KW-1133">Transmembrane helix</keyword>
<keyword id="KW-0813">Transport</keyword>
<evidence type="ECO:0000250" key="1"/>
<evidence type="ECO:0000255" key="2"/>
<evidence type="ECO:0000305" key="3"/>
<sequence length="734" mass="82527">MEHTYQYAWVIPLLPLPVIMSMGFGLFLVPTATKNLRRIWAFPSVLLLSIAMVFSVHLSIQQINGSSIYQYLWSWTVNNDFSLEFGYLIDPLTSIMLILITTVGILVLIYSDDYMSHDEGYLRFFVYISFFNTSMLGLVTSSNLIQIYFFWELVGMCSYLLIGFWFTRPIAASACQKAFVTNRVGDFGLLLGILGFFWITGSLEFRDLFKIANNWIPNNEINSLLTILCAFLLFLGAVAKSAQFPLHVWLPDAMEGPTPISALIHAATMVAAGIFLIARLLPLFISLPLIMSFISLIGTLTLFLGATLALAQRDIKRSLAYSTMSQLGYMMLALGIGSYQAALFHLITHAYSKALLFLGSGSVIHSMEPLVGYSPDKSQNMVLMGGLRKYIPITRTCFLWGTLSLCGIPPLACFWSKDEILSNSWLYSPFFGIIASFTAGLTAFYMFRIYLLTFDGYLRVHFQNYSSTKEDSLYSISLWGKRISKGVNRDFVLSTAKSGVSFFSQNLSKIHVNTGNRIGSFSTSLGTKNTFVYPHEPGNTMLFPLLILLLCTLFIGSIGIHFDNEIGELTILSKWLTPSINFFQESSNSSINSYEFITNAISSVSLAIFGLFIAYMFYGSAYSFFQNLDLINSFVKGGPKKYFFHQLKKKIYSWSYNRGYIDIFYTRTFTLGIRGLTELTQFFDKGVIDGITNGVGLASFCIGEEIKYVGGGRISSYLFFFLCYVSVFLFFFLS</sequence>
<comment type="function">
    <text evidence="1">NDH shuttles electrons from NAD(P)H:plastoquinone, via FMN and iron-sulfur (Fe-S) centers, to quinones in the photosynthetic chain and possibly in a chloroplast respiratory chain. The immediate electron acceptor for the enzyme in this species is believed to be plastoquinone. Couples the redox reaction to proton translocation, and thus conserves the redox energy in a proton gradient (By similarity).</text>
</comment>
<comment type="catalytic activity">
    <reaction>
        <text>a plastoquinone + NADH + (n+1) H(+)(in) = a plastoquinol + NAD(+) + n H(+)(out)</text>
        <dbReference type="Rhea" id="RHEA:42608"/>
        <dbReference type="Rhea" id="RHEA-COMP:9561"/>
        <dbReference type="Rhea" id="RHEA-COMP:9562"/>
        <dbReference type="ChEBI" id="CHEBI:15378"/>
        <dbReference type="ChEBI" id="CHEBI:17757"/>
        <dbReference type="ChEBI" id="CHEBI:57540"/>
        <dbReference type="ChEBI" id="CHEBI:57945"/>
        <dbReference type="ChEBI" id="CHEBI:62192"/>
    </reaction>
</comment>
<comment type="catalytic activity">
    <reaction>
        <text>a plastoquinone + NADPH + (n+1) H(+)(in) = a plastoquinol + NADP(+) + n H(+)(out)</text>
        <dbReference type="Rhea" id="RHEA:42612"/>
        <dbReference type="Rhea" id="RHEA-COMP:9561"/>
        <dbReference type="Rhea" id="RHEA-COMP:9562"/>
        <dbReference type="ChEBI" id="CHEBI:15378"/>
        <dbReference type="ChEBI" id="CHEBI:17757"/>
        <dbReference type="ChEBI" id="CHEBI:57783"/>
        <dbReference type="ChEBI" id="CHEBI:58349"/>
        <dbReference type="ChEBI" id="CHEBI:62192"/>
    </reaction>
</comment>
<comment type="subunit">
    <text evidence="1">NDH is composed of at least 16 different subunits, 5 of which are encoded in the nucleus.</text>
</comment>
<comment type="subcellular location">
    <subcellularLocation>
        <location evidence="1">Plastid</location>
        <location evidence="1">Chloroplast thylakoid membrane</location>
        <topology evidence="1">Multi-pass membrane protein</topology>
    </subcellularLocation>
</comment>
<comment type="similarity">
    <text evidence="3">Belongs to the complex I subunit 5 family.</text>
</comment>